<organism>
    <name type="scientific">Buchnera aphidicola subsp. Acyrthosiphon pisum (strain Tuc7)</name>
    <dbReference type="NCBI Taxonomy" id="561501"/>
    <lineage>
        <taxon>Bacteria</taxon>
        <taxon>Pseudomonadati</taxon>
        <taxon>Pseudomonadota</taxon>
        <taxon>Gammaproteobacteria</taxon>
        <taxon>Enterobacterales</taxon>
        <taxon>Erwiniaceae</taxon>
        <taxon>Buchnera</taxon>
    </lineage>
</organism>
<gene>
    <name evidence="1" type="primary">rplV</name>
    <name type="ordered locus">BUAPTUC7_513</name>
</gene>
<proteinExistence type="inferred from homology"/>
<reference key="1">
    <citation type="journal article" date="2009" name="Science">
        <title>The dynamics and time scale of ongoing genomic erosion in symbiotic bacteria.</title>
        <authorList>
            <person name="Moran N.A."/>
            <person name="McLaughlin H.J."/>
            <person name="Sorek R."/>
        </authorList>
    </citation>
    <scope>NUCLEOTIDE SEQUENCE [LARGE SCALE GENOMIC DNA]</scope>
    <source>
        <strain>Tuc7</strain>
    </source>
</reference>
<sequence length="110" mass="12406">METLAQHRQARSSAQKVRLIVDLIRGKKVPQALNILTYTNKKAAFLVKKVVESAVANAEHNDGADIDKLRIKKIFVNEGSTMKRMMPRAKGRADRILKRTSHITVIVSDR</sequence>
<protein>
    <recommendedName>
        <fullName evidence="1">Large ribosomal subunit protein uL22</fullName>
    </recommendedName>
    <alternativeName>
        <fullName evidence="2">50S ribosomal protein L22</fullName>
    </alternativeName>
</protein>
<keyword id="KW-0687">Ribonucleoprotein</keyword>
<keyword id="KW-0689">Ribosomal protein</keyword>
<keyword id="KW-0694">RNA-binding</keyword>
<keyword id="KW-0699">rRNA-binding</keyword>
<evidence type="ECO:0000255" key="1">
    <source>
        <dbReference type="HAMAP-Rule" id="MF_01331"/>
    </source>
</evidence>
<evidence type="ECO:0000305" key="2"/>
<name>RL22_BUCAT</name>
<accession>B8D844</accession>
<comment type="function">
    <text evidence="1">This protein binds specifically to 23S rRNA; its binding is stimulated by other ribosomal proteins, e.g. L4, L17, and L20. It is important during the early stages of 50S assembly. It makes multiple contacts with different domains of the 23S rRNA in the assembled 50S subunit and ribosome (By similarity).</text>
</comment>
<comment type="function">
    <text evidence="1">The globular domain of the protein is located near the polypeptide exit tunnel on the outside of the subunit, while an extended beta-hairpin is found that lines the wall of the exit tunnel in the center of the 70S ribosome.</text>
</comment>
<comment type="subunit">
    <text evidence="1">Part of the 50S ribosomal subunit.</text>
</comment>
<comment type="similarity">
    <text evidence="1">Belongs to the universal ribosomal protein uL22 family.</text>
</comment>
<feature type="chain" id="PRO_1000166050" description="Large ribosomal subunit protein uL22">
    <location>
        <begin position="1"/>
        <end position="110"/>
    </location>
</feature>
<dbReference type="EMBL" id="CP001158">
    <property type="protein sequence ID" value="ACL30309.1"/>
    <property type="molecule type" value="Genomic_DNA"/>
</dbReference>
<dbReference type="RefSeq" id="WP_009874470.1">
    <property type="nucleotide sequence ID" value="NC_011834.1"/>
</dbReference>
<dbReference type="SMR" id="B8D844"/>
<dbReference type="KEGG" id="bau:BUAPTUC7_513"/>
<dbReference type="HOGENOM" id="CLU_083987_3_3_6"/>
<dbReference type="GO" id="GO:0022625">
    <property type="term" value="C:cytosolic large ribosomal subunit"/>
    <property type="evidence" value="ECO:0007669"/>
    <property type="project" value="TreeGrafter"/>
</dbReference>
<dbReference type="GO" id="GO:0019843">
    <property type="term" value="F:rRNA binding"/>
    <property type="evidence" value="ECO:0007669"/>
    <property type="project" value="UniProtKB-UniRule"/>
</dbReference>
<dbReference type="GO" id="GO:0003735">
    <property type="term" value="F:structural constituent of ribosome"/>
    <property type="evidence" value="ECO:0007669"/>
    <property type="project" value="InterPro"/>
</dbReference>
<dbReference type="GO" id="GO:0006412">
    <property type="term" value="P:translation"/>
    <property type="evidence" value="ECO:0007669"/>
    <property type="project" value="UniProtKB-UniRule"/>
</dbReference>
<dbReference type="CDD" id="cd00336">
    <property type="entry name" value="Ribosomal_L22"/>
    <property type="match status" value="1"/>
</dbReference>
<dbReference type="FunFam" id="3.90.470.10:FF:000001">
    <property type="entry name" value="50S ribosomal protein L22"/>
    <property type="match status" value="1"/>
</dbReference>
<dbReference type="Gene3D" id="3.90.470.10">
    <property type="entry name" value="Ribosomal protein L22/L17"/>
    <property type="match status" value="1"/>
</dbReference>
<dbReference type="HAMAP" id="MF_01331_B">
    <property type="entry name" value="Ribosomal_uL22_B"/>
    <property type="match status" value="1"/>
</dbReference>
<dbReference type="InterPro" id="IPR001063">
    <property type="entry name" value="Ribosomal_uL22"/>
</dbReference>
<dbReference type="InterPro" id="IPR005727">
    <property type="entry name" value="Ribosomal_uL22_bac/chlpt-type"/>
</dbReference>
<dbReference type="InterPro" id="IPR047867">
    <property type="entry name" value="Ribosomal_uL22_bac/org-type"/>
</dbReference>
<dbReference type="InterPro" id="IPR018260">
    <property type="entry name" value="Ribosomal_uL22_CS"/>
</dbReference>
<dbReference type="InterPro" id="IPR036394">
    <property type="entry name" value="Ribosomal_uL22_sf"/>
</dbReference>
<dbReference type="NCBIfam" id="TIGR01044">
    <property type="entry name" value="rplV_bact"/>
    <property type="match status" value="1"/>
</dbReference>
<dbReference type="PANTHER" id="PTHR13501">
    <property type="entry name" value="CHLOROPLAST 50S RIBOSOMAL PROTEIN L22-RELATED"/>
    <property type="match status" value="1"/>
</dbReference>
<dbReference type="PANTHER" id="PTHR13501:SF8">
    <property type="entry name" value="LARGE RIBOSOMAL SUBUNIT PROTEIN UL22M"/>
    <property type="match status" value="1"/>
</dbReference>
<dbReference type="Pfam" id="PF00237">
    <property type="entry name" value="Ribosomal_L22"/>
    <property type="match status" value="1"/>
</dbReference>
<dbReference type="SUPFAM" id="SSF54843">
    <property type="entry name" value="Ribosomal protein L22"/>
    <property type="match status" value="1"/>
</dbReference>
<dbReference type="PROSITE" id="PS00464">
    <property type="entry name" value="RIBOSOMAL_L22"/>
    <property type="match status" value="1"/>
</dbReference>